<name>SSG2_PEA</name>
<sequence length="752" mass="83618">MMLSLGSDATVLPFHAKNLKFTPKLSTLNGDLAFSKGLGVGRLNCGSVRLNHKQHVRAVGKSFGADENGDGSEDDVVNATIEKSKKVLALQRELIQQIAERKKLVSSIDSDSIPGLEGNGVSYESSEKSLSRDSNPQKGSSSSGSAVETKRWHCFQQLCRSKETETWAVSSVGINQGFDEIEKKNDAVKASSKLHFNEQIKNKLYERPDTKDISSSIRTSSLKFENFEGANEPSSKEVANEAENFESGGEKPPPLAGTNVMNIILVSAECAPWSKTGGLGDVAGSLPKALARRGHRVMIVAPHYGNYAEAHDIGVRKRYKVAGQDMEVTYFHTYIDGVDIVFIDSPIFRNLESNIYGGNRLDILRRMVLFCKAAVEVPWHVPCGGICYGDGNLVFIANDWHTALLPVYLKAYYRDHGLMNYTRSVLVIHNIAHQGRGPVEDFNTVDLSGNYLDLFKMYDPVGGEHFNIFAAGLKTADRIVTVSHGYAWELKTSEGGWGLHNIINESDWKFRGIVNGVDTKDWNPQFDAYLTSDGYTNYNLKTLQTGKRQCKAALQRELGLPVREDVPIISFIGRLDHQKGVDLIAEAIPWMMSHDVQLVMLGTGRADLEQMLKEFEAQHCDKIRSWVGFSVKMAHRITAGSDILLMPSRFEPCGLNQLYAMSYGTVPVVHGVGGLRDTVQPFNPFDESGVGWTFDRAEANKLMAALWNCLLTYKDYKKSWEGIQERGMSQDLSWDNAAQQYEEVLVAAKYQW</sequence>
<protein>
    <recommendedName>
        <fullName>Granule-bound starch synthase 2, chloroplastic/amyloplastic</fullName>
        <ecNumber>2.4.1.21</ecNumber>
    </recommendedName>
    <alternativeName>
        <fullName>Granule-bound starch synthase II</fullName>
        <shortName>GBSS-II</shortName>
    </alternativeName>
</protein>
<proteinExistence type="evidence at protein level"/>
<evidence type="ECO:0000250" key="1"/>
<evidence type="ECO:0000256" key="2">
    <source>
        <dbReference type="SAM" id="MobiDB-lite"/>
    </source>
</evidence>
<evidence type="ECO:0000269" key="3">
    <source>
    </source>
</evidence>
<evidence type="ECO:0000305" key="4"/>
<keyword id="KW-0035">Amyloplast</keyword>
<keyword id="KW-0150">Chloroplast</keyword>
<keyword id="KW-0903">Direct protein sequencing</keyword>
<keyword id="KW-0328">Glycosyltransferase</keyword>
<keyword id="KW-0934">Plastid</keyword>
<keyword id="KW-0750">Starch biosynthesis</keyword>
<keyword id="KW-0808">Transferase</keyword>
<keyword id="KW-0809">Transit peptide</keyword>
<accession>Q43093</accession>
<dbReference type="EC" id="2.4.1.21"/>
<dbReference type="EMBL" id="X88790">
    <property type="protein sequence ID" value="CAA61269.1"/>
    <property type="molecule type" value="mRNA"/>
</dbReference>
<dbReference type="PIR" id="S61505">
    <property type="entry name" value="S61505"/>
</dbReference>
<dbReference type="SMR" id="Q43093"/>
<dbReference type="CAZy" id="GT5">
    <property type="family name" value="Glycosyltransferase Family 5"/>
</dbReference>
<dbReference type="UniPathway" id="UPA00152"/>
<dbReference type="GO" id="GO:0009501">
    <property type="term" value="C:amyloplast"/>
    <property type="evidence" value="ECO:0007669"/>
    <property type="project" value="UniProtKB-SubCell"/>
</dbReference>
<dbReference type="GO" id="GO:0009507">
    <property type="term" value="C:chloroplast"/>
    <property type="evidence" value="ECO:0007669"/>
    <property type="project" value="UniProtKB-SubCell"/>
</dbReference>
<dbReference type="GO" id="GO:0009011">
    <property type="term" value="F:alpha-1,4-glucan glucosyltransferase (ADP-glucose donor) activity"/>
    <property type="evidence" value="ECO:0007669"/>
    <property type="project" value="UniProtKB-EC"/>
</dbReference>
<dbReference type="GO" id="GO:0004373">
    <property type="term" value="F:alpha-1,4-glucan glucosyltransferase (UDP-glucose donor) activity"/>
    <property type="evidence" value="ECO:0007669"/>
    <property type="project" value="InterPro"/>
</dbReference>
<dbReference type="GO" id="GO:0019252">
    <property type="term" value="P:starch biosynthetic process"/>
    <property type="evidence" value="ECO:0007669"/>
    <property type="project" value="UniProtKB-UniPathway"/>
</dbReference>
<dbReference type="CDD" id="cd03791">
    <property type="entry name" value="GT5_Glycogen_synthase_DULL1-like"/>
    <property type="match status" value="1"/>
</dbReference>
<dbReference type="FunFam" id="3.40.50.2000:FF:000048">
    <property type="entry name" value="Starch synthase, chloroplastic/amyloplastic"/>
    <property type="match status" value="1"/>
</dbReference>
<dbReference type="Gene3D" id="3.40.50.2000">
    <property type="entry name" value="Glycogen Phosphorylase B"/>
    <property type="match status" value="2"/>
</dbReference>
<dbReference type="HAMAP" id="MF_00484">
    <property type="entry name" value="Glycogen_synth"/>
    <property type="match status" value="1"/>
</dbReference>
<dbReference type="InterPro" id="IPR011835">
    <property type="entry name" value="GS/SS"/>
</dbReference>
<dbReference type="InterPro" id="IPR013534">
    <property type="entry name" value="Starch_synth_cat_dom"/>
</dbReference>
<dbReference type="NCBIfam" id="TIGR02095">
    <property type="entry name" value="glgA"/>
    <property type="match status" value="1"/>
</dbReference>
<dbReference type="PANTHER" id="PTHR45825">
    <property type="entry name" value="GRANULE-BOUND STARCH SYNTHASE 1, CHLOROPLASTIC/AMYLOPLASTIC"/>
    <property type="match status" value="1"/>
</dbReference>
<dbReference type="PANTHER" id="PTHR45825:SF2">
    <property type="entry name" value="STARCH SYNTHASE 2, CHLOROPLASTIC_AMYLOPLASTIC"/>
    <property type="match status" value="1"/>
</dbReference>
<dbReference type="Pfam" id="PF13692">
    <property type="entry name" value="Glyco_trans_1_4"/>
    <property type="match status" value="1"/>
</dbReference>
<dbReference type="Pfam" id="PF08323">
    <property type="entry name" value="Glyco_transf_5"/>
    <property type="match status" value="1"/>
</dbReference>
<dbReference type="SUPFAM" id="SSF53756">
    <property type="entry name" value="UDP-Glycosyltransferase/glycogen phosphorylase"/>
    <property type="match status" value="1"/>
</dbReference>
<comment type="catalytic activity">
    <reaction>
        <text>[(1-&gt;4)-alpha-D-glucosyl](n) + ADP-alpha-D-glucose = [(1-&gt;4)-alpha-D-glucosyl](n+1) + ADP + H(+)</text>
        <dbReference type="Rhea" id="RHEA:18189"/>
        <dbReference type="Rhea" id="RHEA-COMP:9584"/>
        <dbReference type="Rhea" id="RHEA-COMP:9587"/>
        <dbReference type="ChEBI" id="CHEBI:15378"/>
        <dbReference type="ChEBI" id="CHEBI:15444"/>
        <dbReference type="ChEBI" id="CHEBI:57498"/>
        <dbReference type="ChEBI" id="CHEBI:456216"/>
        <dbReference type="EC" id="2.4.1.21"/>
    </reaction>
</comment>
<comment type="pathway">
    <text>Glycan biosynthesis; starch biosynthesis.</text>
</comment>
<comment type="subcellular location">
    <subcellularLocation>
        <location evidence="1">Plastid</location>
        <location evidence="1">Chloroplast</location>
    </subcellularLocation>
    <subcellularLocation>
        <location evidence="1">Plastid</location>
        <location evidence="1">Amyloplast</location>
    </subcellularLocation>
    <text evidence="1">Amyloplast or chloroplast, granule-bound and soluble.</text>
</comment>
<comment type="tissue specificity">
    <text>Widely expressed.</text>
</comment>
<comment type="developmental stage">
    <text>Most highly expressed in early embryos. Levels decline in later stages of development.</text>
</comment>
<comment type="similarity">
    <text evidence="4">Belongs to the glycosyltransferase 1 family. Bacterial/plant glycogen synthase subfamily.</text>
</comment>
<reference key="1">
    <citation type="journal article" date="1992" name="Plant J.">
        <title>Characterization of cDNAs encoding two isoforms of granule-bound starch synthase which show differential expression in developing storage organs of pea and potato.</title>
        <authorList>
            <person name="Dry I."/>
            <person name="Smith A."/>
            <person name="Edwards A."/>
            <person name="Bhattacharyya B."/>
            <person name="Dunn P."/>
            <person name="Martin C."/>
        </authorList>
    </citation>
    <scope>NUCLEOTIDE SEQUENCE [MRNA]</scope>
    <scope>PROTEIN SEQUENCE OF 58-73</scope>
    <source>
        <strain>cv. BC1/RR</strain>
        <tissue>Embryo</tissue>
    </source>
</reference>
<feature type="transit peptide" description="Chloroplast" evidence="3">
    <location>
        <begin position="1"/>
        <end position="57"/>
    </location>
</feature>
<feature type="chain" id="PRO_0000011144" description="Granule-bound starch synthase 2, chloroplastic/amyloplastic">
    <location>
        <begin position="58"/>
        <end position="752"/>
    </location>
</feature>
<feature type="region of interest" description="Disordered" evidence="2">
    <location>
        <begin position="116"/>
        <end position="146"/>
    </location>
</feature>
<feature type="region of interest" description="Disordered" evidence="2">
    <location>
        <begin position="224"/>
        <end position="253"/>
    </location>
</feature>
<feature type="binding site" evidence="1">
    <location>
        <position position="275"/>
    </location>
    <ligand>
        <name>ADP-alpha-D-glucose</name>
        <dbReference type="ChEBI" id="CHEBI:57498"/>
    </ligand>
</feature>
<organism>
    <name type="scientific">Pisum sativum</name>
    <name type="common">Garden pea</name>
    <name type="synonym">Lathyrus oleraceus</name>
    <dbReference type="NCBI Taxonomy" id="3888"/>
    <lineage>
        <taxon>Eukaryota</taxon>
        <taxon>Viridiplantae</taxon>
        <taxon>Streptophyta</taxon>
        <taxon>Embryophyta</taxon>
        <taxon>Tracheophyta</taxon>
        <taxon>Spermatophyta</taxon>
        <taxon>Magnoliopsida</taxon>
        <taxon>eudicotyledons</taxon>
        <taxon>Gunneridae</taxon>
        <taxon>Pentapetalae</taxon>
        <taxon>rosids</taxon>
        <taxon>fabids</taxon>
        <taxon>Fabales</taxon>
        <taxon>Fabaceae</taxon>
        <taxon>Papilionoideae</taxon>
        <taxon>50 kb inversion clade</taxon>
        <taxon>NPAAA clade</taxon>
        <taxon>Hologalegina</taxon>
        <taxon>IRL clade</taxon>
        <taxon>Fabeae</taxon>
        <taxon>Pisum</taxon>
    </lineage>
</organism>